<organism>
    <name type="scientific">Zea mays</name>
    <name type="common">Maize</name>
    <dbReference type="NCBI Taxonomy" id="4577"/>
    <lineage>
        <taxon>Eukaryota</taxon>
        <taxon>Viridiplantae</taxon>
        <taxon>Streptophyta</taxon>
        <taxon>Embryophyta</taxon>
        <taxon>Tracheophyta</taxon>
        <taxon>Spermatophyta</taxon>
        <taxon>Magnoliopsida</taxon>
        <taxon>Liliopsida</taxon>
        <taxon>Poales</taxon>
        <taxon>Poaceae</taxon>
        <taxon>PACMAD clade</taxon>
        <taxon>Panicoideae</taxon>
        <taxon>Andropogonodae</taxon>
        <taxon>Andropogoneae</taxon>
        <taxon>Tripsacinae</taxon>
        <taxon>Zea</taxon>
    </lineage>
</organism>
<comment type="tissue specificity">
    <text>Enhanced expression in male flowers. Accumulates in the glumes and in anther walls, paleas and lemmas of mature florets.</text>
</comment>
<comment type="developmental stage">
    <text>Expressed throughout tassel growth up until mature pollen is produced in the anthers.</text>
</comment>
<feature type="signal peptide" evidence="1">
    <location>
        <begin position="1"/>
        <end position="25"/>
    </location>
</feature>
<feature type="chain" id="PRO_0000021717" description="MFS18 protein">
    <location>
        <begin position="26"/>
        <end position="128"/>
    </location>
</feature>
<feature type="repeat" description="1-1">
    <location>
        <begin position="64"/>
        <end position="75"/>
    </location>
</feature>
<feature type="repeat" description="2-1">
    <location>
        <begin position="64"/>
        <end position="67"/>
    </location>
</feature>
<feature type="repeat" description="1-2">
    <location>
        <begin position="69"/>
        <end position="80"/>
    </location>
</feature>
<feature type="repeat" description="2-2">
    <location>
        <begin position="69"/>
        <end position="72"/>
    </location>
</feature>
<feature type="repeat" description="2-3">
    <location>
        <begin position="74"/>
        <end position="77"/>
    </location>
</feature>
<feature type="repeat" description="2-4">
    <location>
        <begin position="79"/>
        <end position="82"/>
    </location>
</feature>
<feature type="repeat" description="1-3">
    <location>
        <begin position="81"/>
        <end position="92"/>
    </location>
</feature>
<feature type="repeat" description="2-5">
    <location>
        <begin position="86"/>
        <end position="89"/>
    </location>
</feature>
<feature type="repeat" description="2-6">
    <location>
        <begin position="91"/>
        <end position="94"/>
    </location>
</feature>
<feature type="repeat" description="2-7">
    <location>
        <begin position="104"/>
        <end position="107"/>
    </location>
</feature>
<feature type="repeat" description="2-8">
    <location>
        <begin position="113"/>
        <end position="116"/>
    </location>
</feature>
<feature type="region of interest" description="Disordered" evidence="2">
    <location>
        <begin position="26"/>
        <end position="79"/>
    </location>
</feature>
<feature type="region of interest" description="8 X 4 AA approximate repeats">
    <location>
        <begin position="64"/>
        <end position="116"/>
    </location>
</feature>
<feature type="region of interest" description="3 X approximate tandem repeats">
    <location>
        <begin position="64"/>
        <end position="92"/>
    </location>
</feature>
<feature type="region of interest" description="Disordered" evidence="2">
    <location>
        <begin position="99"/>
        <end position="128"/>
    </location>
</feature>
<feature type="compositionally biased region" description="Gly residues" evidence="2">
    <location>
        <begin position="52"/>
        <end position="68"/>
    </location>
</feature>
<feature type="compositionally biased region" description="Low complexity" evidence="2">
    <location>
        <begin position="69"/>
        <end position="79"/>
    </location>
</feature>
<feature type="compositionally biased region" description="Gly residues" evidence="2">
    <location>
        <begin position="99"/>
        <end position="113"/>
    </location>
</feature>
<sequence>MARSSKMMVAARLLALALAVSTAEARNIKTTTTEKKDDAVVQPQTFPPFDRLGGGASPAFGGLPGGSIPGSSIPGFSMPGSGSSLPGFSLPGSGTMPLFGGGSPGFSGFGGMPGSPTAGSVPEHANKP</sequence>
<proteinExistence type="evidence at transcript level"/>
<evidence type="ECO:0000255" key="1"/>
<evidence type="ECO:0000256" key="2">
    <source>
        <dbReference type="SAM" id="MobiDB-lite"/>
    </source>
</evidence>
<name>MFS18_MAIZE</name>
<dbReference type="EMBL" id="X67324">
    <property type="protein sequence ID" value="CAA47738.1"/>
    <property type="molecule type" value="mRNA"/>
</dbReference>
<dbReference type="PIR" id="S25103">
    <property type="entry name" value="S25103"/>
</dbReference>
<dbReference type="STRING" id="4577.P32439"/>
<dbReference type="PaxDb" id="4577-EF517601.1_FGP016"/>
<dbReference type="MaizeGDB" id="78601"/>
<dbReference type="eggNOG" id="ENOG502R61N">
    <property type="taxonomic scope" value="Eukaryota"/>
</dbReference>
<dbReference type="InParanoid" id="P32439"/>
<dbReference type="Proteomes" id="UP000007305">
    <property type="component" value="Unplaced"/>
</dbReference>
<dbReference type="ExpressionAtlas" id="P32439">
    <property type="expression patterns" value="baseline and differential"/>
</dbReference>
<dbReference type="InterPro" id="IPR035322">
    <property type="entry name" value="MFS18"/>
</dbReference>
<dbReference type="Pfam" id="PF17352">
    <property type="entry name" value="MFS18"/>
    <property type="match status" value="1"/>
</dbReference>
<protein>
    <recommendedName>
        <fullName>MFS18 protein</fullName>
    </recommendedName>
</protein>
<gene>
    <name type="primary">MFS18</name>
</gene>
<accession>P32439</accession>
<keyword id="KW-1185">Reference proteome</keyword>
<keyword id="KW-0677">Repeat</keyword>
<keyword id="KW-0732">Signal</keyword>
<reference key="1">
    <citation type="journal article" date="1993" name="Plant J.">
        <title>Isolation and characterization of male flower cDNAs from maize.</title>
        <authorList>
            <person name="Wright S.Y."/>
            <person name="Suner M.-M."/>
            <person name="Bell P.J."/>
            <person name="Vaudin M."/>
            <person name="Greenland A.J."/>
        </authorList>
    </citation>
    <scope>NUCLEOTIDE SEQUENCE [MRNA]</scope>
    <source>
        <strain>cv. BE10</strain>
        <tissue>Tassel</tissue>
    </source>
</reference>